<proteinExistence type="inferred from homology"/>
<dbReference type="EMBL" id="L43967">
    <property type="protein sequence ID" value="AAC71231.1"/>
    <property type="molecule type" value="Genomic_DNA"/>
</dbReference>
<dbReference type="PIR" id="F64201">
    <property type="entry name" value="F64201"/>
</dbReference>
<dbReference type="RefSeq" id="WP_010869291.1">
    <property type="nucleotide sequence ID" value="NC_000908.2"/>
</dbReference>
<dbReference type="SMR" id="P47261"/>
<dbReference type="FunCoup" id="P47261">
    <property type="interactions" value="150"/>
</dbReference>
<dbReference type="STRING" id="243273.MG_015"/>
<dbReference type="GeneID" id="88282132"/>
<dbReference type="KEGG" id="mge:MG_015"/>
<dbReference type="eggNOG" id="COG1132">
    <property type="taxonomic scope" value="Bacteria"/>
</dbReference>
<dbReference type="HOGENOM" id="CLU_000604_84_4_14"/>
<dbReference type="InParanoid" id="P47261"/>
<dbReference type="OrthoDB" id="383768at2"/>
<dbReference type="BioCyc" id="MGEN243273:G1GJ2-17-MONOMER"/>
<dbReference type="Proteomes" id="UP000000807">
    <property type="component" value="Chromosome"/>
</dbReference>
<dbReference type="GO" id="GO:0005886">
    <property type="term" value="C:plasma membrane"/>
    <property type="evidence" value="ECO:0007669"/>
    <property type="project" value="UniProtKB-SubCell"/>
</dbReference>
<dbReference type="GO" id="GO:0140359">
    <property type="term" value="F:ABC-type transporter activity"/>
    <property type="evidence" value="ECO:0007669"/>
    <property type="project" value="InterPro"/>
</dbReference>
<dbReference type="GO" id="GO:0005524">
    <property type="term" value="F:ATP binding"/>
    <property type="evidence" value="ECO:0007669"/>
    <property type="project" value="UniProtKB-KW"/>
</dbReference>
<dbReference type="GO" id="GO:0016887">
    <property type="term" value="F:ATP hydrolysis activity"/>
    <property type="evidence" value="ECO:0007669"/>
    <property type="project" value="InterPro"/>
</dbReference>
<dbReference type="GO" id="GO:0034040">
    <property type="term" value="F:ATPase-coupled lipid transmembrane transporter activity"/>
    <property type="evidence" value="ECO:0000318"/>
    <property type="project" value="GO_Central"/>
</dbReference>
<dbReference type="GO" id="GO:0055085">
    <property type="term" value="P:transmembrane transport"/>
    <property type="evidence" value="ECO:0000318"/>
    <property type="project" value="GO_Central"/>
</dbReference>
<dbReference type="CDD" id="cd18547">
    <property type="entry name" value="ABC_6TM_Tm288_like"/>
    <property type="match status" value="1"/>
</dbReference>
<dbReference type="CDD" id="cd03254">
    <property type="entry name" value="ABCC_Glucan_exporter_like"/>
    <property type="match status" value="1"/>
</dbReference>
<dbReference type="FunFam" id="3.40.50.300:FF:000287">
    <property type="entry name" value="Multidrug ABC transporter ATP-binding protein"/>
    <property type="match status" value="1"/>
</dbReference>
<dbReference type="Gene3D" id="1.20.1560.10">
    <property type="entry name" value="ABC transporter type 1, transmembrane domain"/>
    <property type="match status" value="1"/>
</dbReference>
<dbReference type="Gene3D" id="3.40.50.300">
    <property type="entry name" value="P-loop containing nucleotide triphosphate hydrolases"/>
    <property type="match status" value="1"/>
</dbReference>
<dbReference type="InterPro" id="IPR003593">
    <property type="entry name" value="AAA+_ATPase"/>
</dbReference>
<dbReference type="InterPro" id="IPR011527">
    <property type="entry name" value="ABC1_TM_dom"/>
</dbReference>
<dbReference type="InterPro" id="IPR036640">
    <property type="entry name" value="ABC1_TM_sf"/>
</dbReference>
<dbReference type="InterPro" id="IPR003439">
    <property type="entry name" value="ABC_transporter-like_ATP-bd"/>
</dbReference>
<dbReference type="InterPro" id="IPR017871">
    <property type="entry name" value="ABC_transporter-like_CS"/>
</dbReference>
<dbReference type="InterPro" id="IPR027417">
    <property type="entry name" value="P-loop_NTPase"/>
</dbReference>
<dbReference type="InterPro" id="IPR039421">
    <property type="entry name" value="Type_1_exporter"/>
</dbReference>
<dbReference type="PANTHER" id="PTHR24221">
    <property type="entry name" value="ATP-BINDING CASSETTE SUB-FAMILY B"/>
    <property type="match status" value="1"/>
</dbReference>
<dbReference type="PANTHER" id="PTHR24221:SF654">
    <property type="entry name" value="ATP-BINDING CASSETTE SUB-FAMILY B MEMBER 6"/>
    <property type="match status" value="1"/>
</dbReference>
<dbReference type="Pfam" id="PF00664">
    <property type="entry name" value="ABC_membrane"/>
    <property type="match status" value="1"/>
</dbReference>
<dbReference type="Pfam" id="PF00005">
    <property type="entry name" value="ABC_tran"/>
    <property type="match status" value="1"/>
</dbReference>
<dbReference type="SMART" id="SM00382">
    <property type="entry name" value="AAA"/>
    <property type="match status" value="1"/>
</dbReference>
<dbReference type="SUPFAM" id="SSF90123">
    <property type="entry name" value="ABC transporter transmembrane region"/>
    <property type="match status" value="1"/>
</dbReference>
<dbReference type="SUPFAM" id="SSF52540">
    <property type="entry name" value="P-loop containing nucleoside triphosphate hydrolases"/>
    <property type="match status" value="1"/>
</dbReference>
<dbReference type="PROSITE" id="PS50929">
    <property type="entry name" value="ABC_TM1F"/>
    <property type="match status" value="1"/>
</dbReference>
<dbReference type="PROSITE" id="PS00211">
    <property type="entry name" value="ABC_TRANSPORTER_1"/>
    <property type="match status" value="1"/>
</dbReference>
<dbReference type="PROSITE" id="PS50893">
    <property type="entry name" value="ABC_TRANSPORTER_2"/>
    <property type="match status" value="1"/>
</dbReference>
<reference key="1">
    <citation type="journal article" date="1995" name="Science">
        <title>The minimal gene complement of Mycoplasma genitalium.</title>
        <authorList>
            <person name="Fraser C.M."/>
            <person name="Gocayne J.D."/>
            <person name="White O."/>
            <person name="Adams M.D."/>
            <person name="Clayton R.A."/>
            <person name="Fleischmann R.D."/>
            <person name="Bult C.J."/>
            <person name="Kerlavage A.R."/>
            <person name="Sutton G.G."/>
            <person name="Kelley J.M."/>
            <person name="Fritchman J.L."/>
            <person name="Weidman J.F."/>
            <person name="Small K.V."/>
            <person name="Sandusky M."/>
            <person name="Fuhrmann J.L."/>
            <person name="Nguyen D.T."/>
            <person name="Utterback T.R."/>
            <person name="Saudek D.M."/>
            <person name="Phillips C.A."/>
            <person name="Merrick J.M."/>
            <person name="Tomb J.-F."/>
            <person name="Dougherty B.A."/>
            <person name="Bott K.F."/>
            <person name="Hu P.-C."/>
            <person name="Lucier T.S."/>
            <person name="Peterson S.N."/>
            <person name="Smith H.O."/>
            <person name="Hutchison C.A. III"/>
            <person name="Venter J.C."/>
        </authorList>
    </citation>
    <scope>NUCLEOTIDE SEQUENCE [LARGE SCALE GENOMIC DNA]</scope>
    <source>
        <strain>ATCC 33530 / DSM 19775 / NCTC 10195 / G37</strain>
    </source>
</reference>
<protein>
    <recommendedName>
        <fullName>Putative ABC transporter ATP-binding protein MG015</fullName>
    </recommendedName>
</protein>
<name>Y015_MYCGE</name>
<sequence length="589" mass="66126">MEGSWSYKLLYVFLCIVLGILYGIANPILLAQGLGFIFPITSSNGRAVDSIYSLIYPTNLNVFIRLTIVSVTVFVAYALIFVFNVAQNYVGIKLYQQTCATLRWKAYLKMQSMSTSFFDTQNNGDLMSRLTNDMYNIDNLFTQAGGQAIQSLFNILTTSVLIFLLSPVIALISLSILATLITFSFAFLKKSKTSYSQVQNNLGDMSGYIEEVLTNHKVVHVLKLQEIMIKDFDQYNKSMIKPTVRGNTYSIFLFSWFGFISNITYLVSISIATAFSVNSIPSFGISVINYSFMLSYIASLRQITLALDQIFTLWNLVQLGVVSAERVFKVLDLNVEKDTATIDKLPDIKGNIRFENVAFGYNKDKPTLTGINFSVKHGDVVAIVGPTGAGKSTIINLLMKFYKPFEGKIYMDNFEISDVTKKAWREKISIVLQDSFLFSGTIKENIRLGRQDATDDEIIAACKTANAHDFIMRLPKGYDTYISNKADYLSVGERQLLTIARAVIRNAPVLLLDEATSSVDVHSEKLIQESIGRLMKNKTSFIISHRLSIIRDATLIMVINDGKVLEMGNHDQLMKQNGFYARLKQSSVR</sequence>
<accession>P47261</accession>
<organism>
    <name type="scientific">Mycoplasma genitalium (strain ATCC 33530 / DSM 19775 / NCTC 10195 / G37)</name>
    <name type="common">Mycoplasmoides genitalium</name>
    <dbReference type="NCBI Taxonomy" id="243273"/>
    <lineage>
        <taxon>Bacteria</taxon>
        <taxon>Bacillati</taxon>
        <taxon>Mycoplasmatota</taxon>
        <taxon>Mycoplasmoidales</taxon>
        <taxon>Mycoplasmoidaceae</taxon>
        <taxon>Mycoplasmoides</taxon>
    </lineage>
</organism>
<gene>
    <name type="ordered locus">MG015</name>
</gene>
<keyword id="KW-0067">ATP-binding</keyword>
<keyword id="KW-1003">Cell membrane</keyword>
<keyword id="KW-0472">Membrane</keyword>
<keyword id="KW-0547">Nucleotide-binding</keyword>
<keyword id="KW-1185">Reference proteome</keyword>
<keyword id="KW-0812">Transmembrane</keyword>
<keyword id="KW-1133">Transmembrane helix</keyword>
<keyword id="KW-0813">Transport</keyword>
<feature type="chain" id="PRO_0000093237" description="Putative ABC transporter ATP-binding protein MG015">
    <location>
        <begin position="1"/>
        <end position="589"/>
    </location>
</feature>
<feature type="transmembrane region" description="Helical" evidence="2">
    <location>
        <begin position="9"/>
        <end position="29"/>
    </location>
</feature>
<feature type="transmembrane region" description="Helical" evidence="2">
    <location>
        <begin position="66"/>
        <end position="86"/>
    </location>
</feature>
<feature type="transmembrane region" description="Helical" evidence="2">
    <location>
        <begin position="161"/>
        <end position="181"/>
    </location>
</feature>
<feature type="transmembrane region" description="Helical" evidence="2">
    <location>
        <begin position="251"/>
        <end position="271"/>
    </location>
</feature>
<feature type="transmembrane region" description="Helical" evidence="2">
    <location>
        <begin position="280"/>
        <end position="300"/>
    </location>
</feature>
<feature type="transmembrane region" description="Helical" evidence="2">
    <location>
        <begin position="303"/>
        <end position="323"/>
    </location>
</feature>
<feature type="domain" description="ABC transmembrane type-1" evidence="2">
    <location>
        <begin position="9"/>
        <end position="319"/>
    </location>
</feature>
<feature type="domain" description="ABC transporter" evidence="1">
    <location>
        <begin position="352"/>
        <end position="586"/>
    </location>
</feature>
<feature type="binding site" evidence="1">
    <location>
        <begin position="385"/>
        <end position="392"/>
    </location>
    <ligand>
        <name>ATP</name>
        <dbReference type="ChEBI" id="CHEBI:30616"/>
    </ligand>
</feature>
<comment type="subcellular location">
    <subcellularLocation>
        <location evidence="3">Cell membrane</location>
        <topology evidence="2">Multi-pass membrane protein</topology>
    </subcellularLocation>
</comment>
<comment type="similarity">
    <text evidence="3">Belongs to the ABC transporter superfamily.</text>
</comment>
<evidence type="ECO:0000255" key="1">
    <source>
        <dbReference type="PROSITE-ProRule" id="PRU00434"/>
    </source>
</evidence>
<evidence type="ECO:0000255" key="2">
    <source>
        <dbReference type="PROSITE-ProRule" id="PRU00441"/>
    </source>
</evidence>
<evidence type="ECO:0000305" key="3"/>